<sequence>MTRPVRTRFAPSPTGFIHLGNIRSALYPWAFARKMKGTFVLRIEDTDLERSTEASVDAILEGMAWLGLDYDEGPYYQMQRMDRYREVLAQMLEKDLVYPCYMSTEELDALRERQRAAGEKPRYDGTWRPEPGKVLPEPPAGVTPVLRFRNPLTGSVVWDDAVKGRVEISNEELDDLVIARPDGTPTYNFCVVVDDLDMGITHVIRGDDHVNNTPRQINILRALGGEVPVYAHLPTVLNEQGEKMSKRHGAMSVMGYRDAGYLPEAVLNYLARLGWSHGDAEIFSREQFVEWFDLEHLGKSPAQYDHNKLNWLNNHYIKEADDARLAELAKPFFAALGIDADTIARGPDLVGVMGLMKDRASTVKEIAENSTMFYRSPAPDAQALAQHVTDAVRPALAEFAAALKTAEWTKEAIAAALKAVLGAHKLKMPQLAMPVRLLVAGTTHTPSIDAVLLLFGRDVVVSRLAAALA</sequence>
<organism>
    <name type="scientific">Burkholderia mallei (strain NCTC 10229)</name>
    <dbReference type="NCBI Taxonomy" id="412022"/>
    <lineage>
        <taxon>Bacteria</taxon>
        <taxon>Pseudomonadati</taxon>
        <taxon>Pseudomonadota</taxon>
        <taxon>Betaproteobacteria</taxon>
        <taxon>Burkholderiales</taxon>
        <taxon>Burkholderiaceae</taxon>
        <taxon>Burkholderia</taxon>
        <taxon>pseudomallei group</taxon>
    </lineage>
</organism>
<accession>A2SB31</accession>
<dbReference type="EC" id="6.1.1.17" evidence="1"/>
<dbReference type="EMBL" id="CP000546">
    <property type="protein sequence ID" value="ABN01308.1"/>
    <property type="molecule type" value="Genomic_DNA"/>
</dbReference>
<dbReference type="RefSeq" id="WP_004197094.1">
    <property type="nucleotide sequence ID" value="NC_008836.1"/>
</dbReference>
<dbReference type="SMR" id="A2SB31"/>
<dbReference type="GeneID" id="92979324"/>
<dbReference type="KEGG" id="bml:BMA10229_A3210"/>
<dbReference type="HOGENOM" id="CLU_015768_6_0_4"/>
<dbReference type="Proteomes" id="UP000002283">
    <property type="component" value="Chromosome I"/>
</dbReference>
<dbReference type="GO" id="GO:0005829">
    <property type="term" value="C:cytosol"/>
    <property type="evidence" value="ECO:0007669"/>
    <property type="project" value="TreeGrafter"/>
</dbReference>
<dbReference type="GO" id="GO:0005524">
    <property type="term" value="F:ATP binding"/>
    <property type="evidence" value="ECO:0007669"/>
    <property type="project" value="UniProtKB-UniRule"/>
</dbReference>
<dbReference type="GO" id="GO:0004818">
    <property type="term" value="F:glutamate-tRNA ligase activity"/>
    <property type="evidence" value="ECO:0007669"/>
    <property type="project" value="UniProtKB-UniRule"/>
</dbReference>
<dbReference type="GO" id="GO:0000049">
    <property type="term" value="F:tRNA binding"/>
    <property type="evidence" value="ECO:0007669"/>
    <property type="project" value="InterPro"/>
</dbReference>
<dbReference type="GO" id="GO:0008270">
    <property type="term" value="F:zinc ion binding"/>
    <property type="evidence" value="ECO:0007669"/>
    <property type="project" value="InterPro"/>
</dbReference>
<dbReference type="GO" id="GO:0006424">
    <property type="term" value="P:glutamyl-tRNA aminoacylation"/>
    <property type="evidence" value="ECO:0007669"/>
    <property type="project" value="UniProtKB-UniRule"/>
</dbReference>
<dbReference type="CDD" id="cd00808">
    <property type="entry name" value="GluRS_core"/>
    <property type="match status" value="1"/>
</dbReference>
<dbReference type="FunFam" id="3.40.50.620:FF:000007">
    <property type="entry name" value="Glutamate--tRNA ligase"/>
    <property type="match status" value="1"/>
</dbReference>
<dbReference type="Gene3D" id="1.10.10.350">
    <property type="match status" value="1"/>
</dbReference>
<dbReference type="Gene3D" id="1.10.8.70">
    <property type="entry name" value="Glutamate-tRNA synthetase, class I, anticodon-binding domain 1"/>
    <property type="match status" value="1"/>
</dbReference>
<dbReference type="Gene3D" id="3.40.50.620">
    <property type="entry name" value="HUPs"/>
    <property type="match status" value="1"/>
</dbReference>
<dbReference type="HAMAP" id="MF_00022">
    <property type="entry name" value="Glu_tRNA_synth_type1"/>
    <property type="match status" value="1"/>
</dbReference>
<dbReference type="InterPro" id="IPR045462">
    <property type="entry name" value="aa-tRNA-synth_I_cd-bd"/>
</dbReference>
<dbReference type="InterPro" id="IPR020751">
    <property type="entry name" value="aa-tRNA-synth_I_codon-bd_sub2"/>
</dbReference>
<dbReference type="InterPro" id="IPR001412">
    <property type="entry name" value="aa-tRNA-synth_I_CS"/>
</dbReference>
<dbReference type="InterPro" id="IPR008925">
    <property type="entry name" value="aa_tRNA-synth_I_cd-bd_sf"/>
</dbReference>
<dbReference type="InterPro" id="IPR004527">
    <property type="entry name" value="Glu-tRNA-ligase_bac/mito"/>
</dbReference>
<dbReference type="InterPro" id="IPR020752">
    <property type="entry name" value="Glu-tRNA-synth_I_codon-bd_sub1"/>
</dbReference>
<dbReference type="InterPro" id="IPR000924">
    <property type="entry name" value="Glu/Gln-tRNA-synth"/>
</dbReference>
<dbReference type="InterPro" id="IPR020058">
    <property type="entry name" value="Glu/Gln-tRNA-synth_Ib_cat-dom"/>
</dbReference>
<dbReference type="InterPro" id="IPR049940">
    <property type="entry name" value="GluQ/Sye"/>
</dbReference>
<dbReference type="InterPro" id="IPR033910">
    <property type="entry name" value="GluRS_core"/>
</dbReference>
<dbReference type="InterPro" id="IPR014729">
    <property type="entry name" value="Rossmann-like_a/b/a_fold"/>
</dbReference>
<dbReference type="NCBIfam" id="TIGR00464">
    <property type="entry name" value="gltX_bact"/>
    <property type="match status" value="1"/>
</dbReference>
<dbReference type="PANTHER" id="PTHR43311">
    <property type="entry name" value="GLUTAMATE--TRNA LIGASE"/>
    <property type="match status" value="1"/>
</dbReference>
<dbReference type="PANTHER" id="PTHR43311:SF2">
    <property type="entry name" value="GLUTAMATE--TRNA LIGASE, MITOCHONDRIAL-RELATED"/>
    <property type="match status" value="1"/>
</dbReference>
<dbReference type="Pfam" id="PF19269">
    <property type="entry name" value="Anticodon_2"/>
    <property type="match status" value="1"/>
</dbReference>
<dbReference type="Pfam" id="PF00749">
    <property type="entry name" value="tRNA-synt_1c"/>
    <property type="match status" value="1"/>
</dbReference>
<dbReference type="PRINTS" id="PR00987">
    <property type="entry name" value="TRNASYNTHGLU"/>
</dbReference>
<dbReference type="SUPFAM" id="SSF48163">
    <property type="entry name" value="An anticodon-binding domain of class I aminoacyl-tRNA synthetases"/>
    <property type="match status" value="1"/>
</dbReference>
<dbReference type="SUPFAM" id="SSF52374">
    <property type="entry name" value="Nucleotidylyl transferase"/>
    <property type="match status" value="1"/>
</dbReference>
<dbReference type="PROSITE" id="PS00178">
    <property type="entry name" value="AA_TRNA_LIGASE_I"/>
    <property type="match status" value="1"/>
</dbReference>
<comment type="function">
    <text evidence="1">Catalyzes the attachment of glutamate to tRNA(Glu) in a two-step reaction: glutamate is first activated by ATP to form Glu-AMP and then transferred to the acceptor end of tRNA(Glu).</text>
</comment>
<comment type="catalytic activity">
    <reaction evidence="1">
        <text>tRNA(Glu) + L-glutamate + ATP = L-glutamyl-tRNA(Glu) + AMP + diphosphate</text>
        <dbReference type="Rhea" id="RHEA:23540"/>
        <dbReference type="Rhea" id="RHEA-COMP:9663"/>
        <dbReference type="Rhea" id="RHEA-COMP:9680"/>
        <dbReference type="ChEBI" id="CHEBI:29985"/>
        <dbReference type="ChEBI" id="CHEBI:30616"/>
        <dbReference type="ChEBI" id="CHEBI:33019"/>
        <dbReference type="ChEBI" id="CHEBI:78442"/>
        <dbReference type="ChEBI" id="CHEBI:78520"/>
        <dbReference type="ChEBI" id="CHEBI:456215"/>
        <dbReference type="EC" id="6.1.1.17"/>
    </reaction>
</comment>
<comment type="subunit">
    <text evidence="1">Monomer.</text>
</comment>
<comment type="subcellular location">
    <subcellularLocation>
        <location evidence="1">Cytoplasm</location>
    </subcellularLocation>
</comment>
<comment type="similarity">
    <text evidence="1">Belongs to the class-I aminoacyl-tRNA synthetase family. Glutamate--tRNA ligase type 1 subfamily.</text>
</comment>
<evidence type="ECO:0000255" key="1">
    <source>
        <dbReference type="HAMAP-Rule" id="MF_00022"/>
    </source>
</evidence>
<evidence type="ECO:0000256" key="2">
    <source>
        <dbReference type="SAM" id="MobiDB-lite"/>
    </source>
</evidence>
<gene>
    <name evidence="1" type="primary">gltX</name>
    <name type="ordered locus">BMA10229_A3210</name>
</gene>
<proteinExistence type="inferred from homology"/>
<feature type="chain" id="PRO_1000001882" description="Glutamate--tRNA ligase">
    <location>
        <begin position="1"/>
        <end position="469"/>
    </location>
</feature>
<feature type="region of interest" description="Disordered" evidence="2">
    <location>
        <begin position="118"/>
        <end position="139"/>
    </location>
</feature>
<feature type="short sequence motif" description="'HIGH' region" evidence="1">
    <location>
        <begin position="11"/>
        <end position="21"/>
    </location>
</feature>
<feature type="short sequence motif" description="'KMSKS' region" evidence="1">
    <location>
        <begin position="243"/>
        <end position="247"/>
    </location>
</feature>
<feature type="compositionally biased region" description="Basic and acidic residues" evidence="2">
    <location>
        <begin position="118"/>
        <end position="131"/>
    </location>
</feature>
<feature type="binding site" evidence="1">
    <location>
        <position position="246"/>
    </location>
    <ligand>
        <name>ATP</name>
        <dbReference type="ChEBI" id="CHEBI:30616"/>
    </ligand>
</feature>
<protein>
    <recommendedName>
        <fullName evidence="1">Glutamate--tRNA ligase</fullName>
        <ecNumber evidence="1">6.1.1.17</ecNumber>
    </recommendedName>
    <alternativeName>
        <fullName evidence="1">Glutamyl-tRNA synthetase</fullName>
        <shortName evidence="1">GluRS</shortName>
    </alternativeName>
</protein>
<name>SYE_BURM9</name>
<keyword id="KW-0030">Aminoacyl-tRNA synthetase</keyword>
<keyword id="KW-0067">ATP-binding</keyword>
<keyword id="KW-0963">Cytoplasm</keyword>
<keyword id="KW-0436">Ligase</keyword>
<keyword id="KW-0547">Nucleotide-binding</keyword>
<keyword id="KW-0648">Protein biosynthesis</keyword>
<reference key="1">
    <citation type="journal article" date="2010" name="Genome Biol. Evol.">
        <title>Continuing evolution of Burkholderia mallei through genome reduction and large-scale rearrangements.</title>
        <authorList>
            <person name="Losada L."/>
            <person name="Ronning C.M."/>
            <person name="DeShazer D."/>
            <person name="Woods D."/>
            <person name="Fedorova N."/>
            <person name="Kim H.S."/>
            <person name="Shabalina S.A."/>
            <person name="Pearson T.R."/>
            <person name="Brinkac L."/>
            <person name="Tan P."/>
            <person name="Nandi T."/>
            <person name="Crabtree J."/>
            <person name="Badger J."/>
            <person name="Beckstrom-Sternberg S."/>
            <person name="Saqib M."/>
            <person name="Schutzer S.E."/>
            <person name="Keim P."/>
            <person name="Nierman W.C."/>
        </authorList>
    </citation>
    <scope>NUCLEOTIDE SEQUENCE [LARGE SCALE GENOMIC DNA]</scope>
    <source>
        <strain>NCTC 10229</strain>
    </source>
</reference>